<sequence length="338" mass="35596">MLSALARPAGAALRRSFSTSXQNNAKVAVLGASGGIGQPLSLLLKNSPLVSRLTLYDIAHTPGVAADLSHIETRATVKGYLGPEQLPDCLKGCDVVVIPAGVPRKPGMTRDDLFNTNATIVATLTAACAQHCPDAMICIISNPVNSTIPITAEVFKKHGVYNPNKIFGVTTLDIVRANAFVAELKGLDPARVSVPVIGGHAGKTIIPLISQCTPKVDFPQDQLSTLTGRIQEAGTEVVKAKAGAGSATLSMAYAGARFVFSLVDAMNGKEGVVECSFVKSQETDCPYFSTPLLLGKKGIEKNLGIGKISPFEEKMIAEAIPELKASIKKGEEFVKNMK</sequence>
<keyword id="KW-0002">3D-structure</keyword>
<keyword id="KW-0007">Acetylation</keyword>
<keyword id="KW-0903">Direct protein sequencing</keyword>
<keyword id="KW-0325">Glycoprotein</keyword>
<keyword id="KW-0496">Mitochondrion</keyword>
<keyword id="KW-0520">NAD</keyword>
<keyword id="KW-0560">Oxidoreductase</keyword>
<keyword id="KW-0597">Phosphoprotein</keyword>
<keyword id="KW-1185">Reference proteome</keyword>
<keyword id="KW-0809">Transit peptide</keyword>
<keyword id="KW-0816">Tricarboxylic acid cycle</keyword>
<reference key="1">
    <citation type="journal article" date="1996" name="Mamm. Genome">
        <title>Evaluation and characterization of a porcine small intestine cDNA library: analysis of 839 clones.</title>
        <authorList>
            <person name="Winteroe A.K."/>
            <person name="Fredholm M."/>
            <person name="Davies W."/>
        </authorList>
    </citation>
    <scope>NUCLEOTIDE SEQUENCE [LARGE SCALE MRNA] OF 1-40</scope>
    <source>
        <tissue>Small intestine</tissue>
    </source>
</reference>
<reference key="2">
    <citation type="journal article" date="1982" name="Proc. Natl. Acad. Sci. U.S.A.">
        <title>Amino acid sequence homology among the 2-hydroxy acid dehydrogenases: mitochondrial and cytoplasmic malate dehydrogenases form a homologous system with lactate dehydrogenase.</title>
        <authorList>
            <person name="Birktoft J.J."/>
            <person name="Fernley R.T."/>
            <person name="Bradshaw R.A."/>
            <person name="Banaszak L.J."/>
        </authorList>
    </citation>
    <scope>PROTEIN SEQUENCE OF 25-338</scope>
</reference>
<reference key="3">
    <citation type="journal article" date="1987" name="Biochemistry">
        <title>Cloning and sequence analysis of cDNAs encoding mammalian mitochondrial malate dehydrogenase.</title>
        <authorList>
            <person name="Joh T."/>
            <person name="Takeshima H."/>
            <person name="Tsuzuki T."/>
            <person name="Shimada K."/>
            <person name="Tanase S."/>
            <person name="Morino Y."/>
        </authorList>
    </citation>
    <scope>NUCLEOTIDE SEQUENCE [MRNA] OF 41-338</scope>
</reference>
<reference evidence="9" key="4">
    <citation type="journal article" date="1994" name="Biochemistry">
        <title>Refined crystal structure of mitochondrial malate dehydrogenase from porcine heart and the consensus structure for dicarboxylic acid oxidoreductases.</title>
        <authorList>
            <person name="Gleason W.B."/>
            <person name="Fu Z."/>
            <person name="Birktoft J.J."/>
            <person name="Banaszak L.J."/>
        </authorList>
    </citation>
    <scope>X-RAY CRYSTALLOGRAPHY (1.9 ANGSTROMS) IN COMPLEX WITH SUBSTRATE ANALOG</scope>
    <scope>SUBUNIT</scope>
    <scope>ACTIVE SITE</scope>
    <source>
        <tissue>Heart</tissue>
    </source>
</reference>
<accession>P00346</accession>
<accession>Q95308</accession>
<name>MDHM_PIG</name>
<gene>
    <name type="primary">MDH2</name>
</gene>
<protein>
    <recommendedName>
        <fullName>Malate dehydrogenase, mitochondrial</fullName>
        <ecNumber>1.1.1.37</ecNumber>
    </recommendedName>
</protein>
<feature type="transit peptide" description="Mitochondrion" evidence="6">
    <location>
        <begin position="1"/>
        <end position="24"/>
    </location>
</feature>
<feature type="chain" id="PRO_0000018630" description="Malate dehydrogenase, mitochondrial">
    <location>
        <begin position="25"/>
        <end position="338"/>
    </location>
</feature>
<feature type="active site" description="Proton acceptor" evidence="7 9">
    <location>
        <position position="200"/>
    </location>
</feature>
<feature type="binding site" evidence="3">
    <location>
        <begin position="31"/>
        <end position="37"/>
    </location>
    <ligand>
        <name>NAD(+)</name>
        <dbReference type="ChEBI" id="CHEBI:57540"/>
    </ligand>
</feature>
<feature type="binding site" evidence="3">
    <location>
        <position position="57"/>
    </location>
    <ligand>
        <name>NAD(+)</name>
        <dbReference type="ChEBI" id="CHEBI:57540"/>
    </ligand>
</feature>
<feature type="binding site" evidence="7 9">
    <location>
        <position position="104"/>
    </location>
    <ligand>
        <name>substrate</name>
    </ligand>
</feature>
<feature type="binding site" evidence="7 9">
    <location>
        <position position="110"/>
    </location>
    <ligand>
        <name>substrate</name>
    </ligand>
</feature>
<feature type="binding site" evidence="3">
    <location>
        <position position="117"/>
    </location>
    <ligand>
        <name>NAD(+)</name>
        <dbReference type="ChEBI" id="CHEBI:57540"/>
    </ligand>
</feature>
<feature type="binding site" evidence="3">
    <location>
        <begin position="140"/>
        <end position="142"/>
    </location>
    <ligand>
        <name>NAD(+)</name>
        <dbReference type="ChEBI" id="CHEBI:57540"/>
    </ligand>
</feature>
<feature type="binding site" evidence="7 9">
    <location>
        <position position="142"/>
    </location>
    <ligand>
        <name>substrate</name>
    </ligand>
</feature>
<feature type="binding site" evidence="7 9">
    <location>
        <position position="176"/>
    </location>
    <ligand>
        <name>substrate</name>
    </ligand>
</feature>
<feature type="binding site" evidence="3">
    <location>
        <position position="251"/>
    </location>
    <ligand>
        <name>NAD(+)</name>
        <dbReference type="ChEBI" id="CHEBI:57540"/>
    </ligand>
</feature>
<feature type="modified residue" description="N6-acetyllysine; alternate" evidence="2">
    <location>
        <position position="78"/>
    </location>
</feature>
<feature type="modified residue" description="N6-succinyllysine; alternate" evidence="2">
    <location>
        <position position="78"/>
    </location>
</feature>
<feature type="modified residue" description="N6-acetyllysine; alternate" evidence="2">
    <location>
        <position position="91"/>
    </location>
</feature>
<feature type="modified residue" description="N6-succinyllysine; alternate" evidence="2">
    <location>
        <position position="91"/>
    </location>
</feature>
<feature type="modified residue" description="N6-acetyllysine" evidence="3">
    <location>
        <position position="165"/>
    </location>
</feature>
<feature type="modified residue" description="N6-acetyllysine; alternate" evidence="4">
    <location>
        <position position="185"/>
    </location>
</feature>
<feature type="modified residue" description="N6-succinyllysine; alternate" evidence="2">
    <location>
        <position position="185"/>
    </location>
</feature>
<feature type="modified residue" description="N6-succinyllysine" evidence="2">
    <location>
        <position position="203"/>
    </location>
</feature>
<feature type="modified residue" description="N6-acetyllysine; alternate" evidence="2">
    <location>
        <position position="215"/>
    </location>
</feature>
<feature type="modified residue" description="N6-succinyllysine; alternate" evidence="2">
    <location>
        <position position="215"/>
    </location>
</feature>
<feature type="modified residue" description="N6-acetyllysine; alternate" evidence="2">
    <location>
        <position position="239"/>
    </location>
</feature>
<feature type="modified residue" description="N6-malonyllysine; alternate" evidence="4">
    <location>
        <position position="239"/>
    </location>
</feature>
<feature type="modified residue" description="N6-succinyllysine; alternate" evidence="4">
    <location>
        <position position="239"/>
    </location>
</feature>
<feature type="modified residue" description="Phosphoserine" evidence="3">
    <location>
        <position position="246"/>
    </location>
</feature>
<feature type="modified residue" description="N6-succinyllysine" evidence="2">
    <location>
        <position position="269"/>
    </location>
</feature>
<feature type="modified residue" description="N6-acetyllysine; alternate" evidence="2">
    <location>
        <position position="296"/>
    </location>
</feature>
<feature type="modified residue" description="N6-succinyllysine; alternate" evidence="2">
    <location>
        <position position="296"/>
    </location>
</feature>
<feature type="modified residue" description="N6-acetyllysine; alternate" evidence="3">
    <location>
        <position position="301"/>
    </location>
</feature>
<feature type="modified residue" description="N6-succinyllysine; alternate" evidence="4">
    <location>
        <position position="301"/>
    </location>
</feature>
<feature type="modified residue" description="N6-acetyllysine; alternate" evidence="4">
    <location>
        <position position="307"/>
    </location>
</feature>
<feature type="modified residue" description="N6-malonyllysine; alternate" evidence="3">
    <location>
        <position position="307"/>
    </location>
</feature>
<feature type="modified residue" description="N6-succinyllysine; alternate" evidence="2">
    <location>
        <position position="307"/>
    </location>
</feature>
<feature type="modified residue" description="N6-acetyllysine; alternate" evidence="4">
    <location>
        <position position="314"/>
    </location>
</feature>
<feature type="modified residue" description="N6-succinyllysine; alternate" evidence="2">
    <location>
        <position position="314"/>
    </location>
</feature>
<feature type="modified residue" description="N6-acetyllysine; alternate" evidence="2">
    <location>
        <position position="324"/>
    </location>
</feature>
<feature type="modified residue" description="N6-succinyllysine; alternate" evidence="2">
    <location>
        <position position="324"/>
    </location>
</feature>
<feature type="modified residue" description="Phosphoserine" evidence="3">
    <location>
        <position position="326"/>
    </location>
</feature>
<feature type="modified residue" description="N6-acetyllysine; alternate" evidence="4">
    <location>
        <position position="328"/>
    </location>
</feature>
<feature type="modified residue" description="N6-succinyllysine; alternate" evidence="4">
    <location>
        <position position="328"/>
    </location>
</feature>
<feature type="modified residue" description="N6-acetyllysine; alternate" evidence="3">
    <location>
        <position position="329"/>
    </location>
</feature>
<feature type="modified residue" description="N6-malonyllysine; alternate" evidence="4">
    <location>
        <position position="329"/>
    </location>
</feature>
<feature type="modified residue" description="N6-acetyllysine; alternate" evidence="3">
    <location>
        <position position="335"/>
    </location>
</feature>
<feature type="modified residue" description="N6-succinyllysine; alternate" evidence="2">
    <location>
        <position position="335"/>
    </location>
</feature>
<feature type="glycosylation site" description="O-linked (GlcNAc) serine" evidence="1">
    <location>
        <position position="33"/>
    </location>
</feature>
<feature type="sequence conflict" description="In Ref. 3; AAA31071." evidence="8" ref="3">
    <original>I</original>
    <variation>M</variation>
    <location>
        <position position="120"/>
    </location>
</feature>
<feature type="sequence conflict" description="In Ref. 3; AAA31071." evidence="8" ref="3">
    <original>A</original>
    <variation>V</variation>
    <location>
        <position position="126"/>
    </location>
</feature>
<feature type="sequence conflict" description="In Ref. 3; AAA31071." evidence="8" ref="3">
    <original>I</original>
    <variation>M</variation>
    <location>
        <position position="150"/>
    </location>
</feature>
<feature type="sequence conflict" description="In Ref. 3; AAA31071." evidence="8" ref="3">
    <original>G</original>
    <variation>R</variation>
    <location>
        <position position="304"/>
    </location>
</feature>
<feature type="sequence conflict" description="In Ref. 3; AAA31071." evidence="8" ref="3">
    <original>M</original>
    <variation>T</variation>
    <location>
        <position position="337"/>
    </location>
</feature>
<feature type="strand" evidence="10">
    <location>
        <begin position="26"/>
        <end position="31"/>
    </location>
</feature>
<feature type="helix" evidence="10">
    <location>
        <begin position="37"/>
        <end position="45"/>
    </location>
</feature>
<feature type="strand" evidence="10">
    <location>
        <begin position="51"/>
        <end position="60"/>
    </location>
</feature>
<feature type="helix" evidence="10">
    <location>
        <begin position="61"/>
        <end position="68"/>
    </location>
</feature>
<feature type="strand" evidence="10">
    <location>
        <begin position="71"/>
        <end position="74"/>
    </location>
</feature>
<feature type="strand" evidence="10">
    <location>
        <begin position="76"/>
        <end position="82"/>
    </location>
</feature>
<feature type="helix" evidence="10">
    <location>
        <begin position="83"/>
        <end position="85"/>
    </location>
</feature>
<feature type="helix" evidence="10">
    <location>
        <begin position="86"/>
        <end position="90"/>
    </location>
</feature>
<feature type="strand" evidence="10">
    <location>
        <begin position="94"/>
        <end position="98"/>
    </location>
</feature>
<feature type="helix" evidence="10">
    <location>
        <begin position="110"/>
        <end position="113"/>
    </location>
</feature>
<feature type="helix" evidence="10">
    <location>
        <begin position="114"/>
        <end position="131"/>
    </location>
</feature>
<feature type="strand" evidence="10">
    <location>
        <begin position="135"/>
        <end position="139"/>
    </location>
</feature>
<feature type="helix" evidence="10">
    <location>
        <begin position="144"/>
        <end position="157"/>
    </location>
</feature>
<feature type="strand" evidence="10">
    <location>
        <begin position="165"/>
        <end position="168"/>
    </location>
</feature>
<feature type="helix" evidence="10">
    <location>
        <begin position="171"/>
        <end position="184"/>
    </location>
</feature>
<feature type="helix" evidence="10">
    <location>
        <begin position="189"/>
        <end position="191"/>
    </location>
</feature>
<feature type="strand" evidence="10">
    <location>
        <begin position="196"/>
        <end position="198"/>
    </location>
</feature>
<feature type="helix" evidence="10">
    <location>
        <begin position="202"/>
        <end position="204"/>
    </location>
</feature>
<feature type="strand" evidence="10">
    <location>
        <begin position="205"/>
        <end position="207"/>
    </location>
</feature>
<feature type="helix" evidence="10">
    <location>
        <begin position="209"/>
        <end position="211"/>
    </location>
</feature>
<feature type="helix" evidence="10">
    <location>
        <begin position="220"/>
        <end position="241"/>
    </location>
</feature>
<feature type="helix" evidence="10">
    <location>
        <begin position="249"/>
        <end position="267"/>
    </location>
</feature>
<feature type="strand" evidence="10">
    <location>
        <begin position="273"/>
        <end position="279"/>
    </location>
</feature>
<feature type="strand" evidence="10">
    <location>
        <begin position="282"/>
        <end position="295"/>
    </location>
</feature>
<feature type="strand" evidence="10">
    <location>
        <begin position="298"/>
        <end position="302"/>
    </location>
</feature>
<feature type="helix" evidence="10">
    <location>
        <begin position="310"/>
        <end position="334"/>
    </location>
</feature>
<comment type="catalytic activity">
    <reaction evidence="5">
        <text>(S)-malate + NAD(+) = oxaloacetate + NADH + H(+)</text>
        <dbReference type="Rhea" id="RHEA:21432"/>
        <dbReference type="ChEBI" id="CHEBI:15378"/>
        <dbReference type="ChEBI" id="CHEBI:15589"/>
        <dbReference type="ChEBI" id="CHEBI:16452"/>
        <dbReference type="ChEBI" id="CHEBI:57540"/>
        <dbReference type="ChEBI" id="CHEBI:57945"/>
        <dbReference type="EC" id="1.1.1.37"/>
    </reaction>
</comment>
<comment type="activity regulation">
    <text evidence="3">Enzyme activity is enhanced by acetylation.</text>
</comment>
<comment type="subunit">
    <text evidence="7">Homodimer.</text>
</comment>
<comment type="subcellular location">
    <subcellularLocation>
        <location evidence="1">Mitochondrion matrix</location>
    </subcellularLocation>
</comment>
<comment type="PTM">
    <text evidence="3">Acetylation is enhanced after treatment either with trichostin A (TCA) or with nicotinamide (NAM) with the appearance of tri- and tetraacetylations. Glucose also increases acetylation.</text>
</comment>
<comment type="similarity">
    <text evidence="8">Belongs to the LDH/MDH superfamily. MDH type 1 family.</text>
</comment>
<organism>
    <name type="scientific">Sus scrofa</name>
    <name type="common">Pig</name>
    <dbReference type="NCBI Taxonomy" id="9823"/>
    <lineage>
        <taxon>Eukaryota</taxon>
        <taxon>Metazoa</taxon>
        <taxon>Chordata</taxon>
        <taxon>Craniata</taxon>
        <taxon>Vertebrata</taxon>
        <taxon>Euteleostomi</taxon>
        <taxon>Mammalia</taxon>
        <taxon>Eutheria</taxon>
        <taxon>Laurasiatheria</taxon>
        <taxon>Artiodactyla</taxon>
        <taxon>Suina</taxon>
        <taxon>Suidae</taxon>
        <taxon>Sus</taxon>
    </lineage>
</organism>
<evidence type="ECO:0000250" key="1">
    <source>
        <dbReference type="UniProtKB" id="P04636"/>
    </source>
</evidence>
<evidence type="ECO:0000250" key="2">
    <source>
        <dbReference type="UniProtKB" id="P08249"/>
    </source>
</evidence>
<evidence type="ECO:0000250" key="3">
    <source>
        <dbReference type="UniProtKB" id="P40926"/>
    </source>
</evidence>
<evidence type="ECO:0000250" key="4">
    <source>
        <dbReference type="UniProtKB" id="Q32LG3"/>
    </source>
</evidence>
<evidence type="ECO:0000255" key="5">
    <source>
        <dbReference type="PROSITE-ProRule" id="PRU10004"/>
    </source>
</evidence>
<evidence type="ECO:0000269" key="6">
    <source>
    </source>
</evidence>
<evidence type="ECO:0000269" key="7">
    <source>
    </source>
</evidence>
<evidence type="ECO:0000305" key="8"/>
<evidence type="ECO:0007744" key="9">
    <source>
        <dbReference type="PDB" id="1MLD"/>
    </source>
</evidence>
<evidence type="ECO:0007829" key="10">
    <source>
        <dbReference type="PDB" id="1MLD"/>
    </source>
</evidence>
<dbReference type="EC" id="1.1.1.37"/>
<dbReference type="EMBL" id="Z81157">
    <property type="protein sequence ID" value="CAB03545.1"/>
    <property type="molecule type" value="mRNA"/>
</dbReference>
<dbReference type="EMBL" id="M16427">
    <property type="protein sequence ID" value="AAA31071.1"/>
    <property type="molecule type" value="mRNA"/>
</dbReference>
<dbReference type="PIR" id="A00355">
    <property type="entry name" value="DEPGMM"/>
</dbReference>
<dbReference type="PDB" id="1MLD">
    <property type="method" value="X-ray"/>
    <property type="resolution" value="1.83 A"/>
    <property type="chains" value="A/B/C/D=25-338"/>
</dbReference>
<dbReference type="PDBsum" id="1MLD"/>
<dbReference type="SMR" id="P00346"/>
<dbReference type="FunCoup" id="P00346">
    <property type="interactions" value="2478"/>
</dbReference>
<dbReference type="IntAct" id="P00346">
    <property type="interactions" value="3"/>
</dbReference>
<dbReference type="MINT" id="P00346"/>
<dbReference type="STRING" id="9823.ENSSSCP00000070379"/>
<dbReference type="BindingDB" id="P00346"/>
<dbReference type="ChEMBL" id="CHEMBL3444"/>
<dbReference type="DrugCentral" id="P00346"/>
<dbReference type="GlyCosmos" id="P00346">
    <property type="glycosylation" value="1 site, No reported glycans"/>
</dbReference>
<dbReference type="GlyGen" id="P00346">
    <property type="glycosylation" value="1 site"/>
</dbReference>
<dbReference type="iPTMnet" id="P00346"/>
<dbReference type="PaxDb" id="9823-ENSSSCP00000025866"/>
<dbReference type="PeptideAtlas" id="P00346"/>
<dbReference type="eggNOG" id="KOG1494">
    <property type="taxonomic scope" value="Eukaryota"/>
</dbReference>
<dbReference type="InParanoid" id="P00346"/>
<dbReference type="SABIO-RK" id="P00346"/>
<dbReference type="EvolutionaryTrace" id="P00346"/>
<dbReference type="Proteomes" id="UP000008227">
    <property type="component" value="Unplaced"/>
</dbReference>
<dbReference type="Proteomes" id="UP000314985">
    <property type="component" value="Unplaced"/>
</dbReference>
<dbReference type="Proteomes" id="UP000694570">
    <property type="component" value="Unplaced"/>
</dbReference>
<dbReference type="Proteomes" id="UP000694571">
    <property type="component" value="Unplaced"/>
</dbReference>
<dbReference type="Proteomes" id="UP000694720">
    <property type="component" value="Unplaced"/>
</dbReference>
<dbReference type="Proteomes" id="UP000694722">
    <property type="component" value="Unplaced"/>
</dbReference>
<dbReference type="Proteomes" id="UP000694723">
    <property type="component" value="Unplaced"/>
</dbReference>
<dbReference type="Proteomes" id="UP000694724">
    <property type="component" value="Unplaced"/>
</dbReference>
<dbReference type="Proteomes" id="UP000694725">
    <property type="component" value="Unplaced"/>
</dbReference>
<dbReference type="Proteomes" id="UP000694726">
    <property type="component" value="Unplaced"/>
</dbReference>
<dbReference type="Proteomes" id="UP000694727">
    <property type="component" value="Unplaced"/>
</dbReference>
<dbReference type="Proteomes" id="UP000694728">
    <property type="component" value="Unplaced"/>
</dbReference>
<dbReference type="GO" id="GO:0005737">
    <property type="term" value="C:cytoplasm"/>
    <property type="evidence" value="ECO:0000318"/>
    <property type="project" value="GO_Central"/>
</dbReference>
<dbReference type="GO" id="GO:0005759">
    <property type="term" value="C:mitochondrial matrix"/>
    <property type="evidence" value="ECO:0007669"/>
    <property type="project" value="UniProtKB-SubCell"/>
</dbReference>
<dbReference type="GO" id="GO:0005739">
    <property type="term" value="C:mitochondrion"/>
    <property type="evidence" value="ECO:0000318"/>
    <property type="project" value="GO_Central"/>
</dbReference>
<dbReference type="GO" id="GO:0030060">
    <property type="term" value="F:L-malate dehydrogenase (NAD+) activity"/>
    <property type="evidence" value="ECO:0000250"/>
    <property type="project" value="UniProtKB"/>
</dbReference>
<dbReference type="GO" id="GO:0042803">
    <property type="term" value="F:protein homodimerization activity"/>
    <property type="evidence" value="ECO:0000314"/>
    <property type="project" value="UniProtKB"/>
</dbReference>
<dbReference type="GO" id="GO:0051087">
    <property type="term" value="F:protein-folding chaperone binding"/>
    <property type="evidence" value="ECO:0000353"/>
    <property type="project" value="CAFA"/>
</dbReference>
<dbReference type="GO" id="GO:0009060">
    <property type="term" value="P:aerobic respiration"/>
    <property type="evidence" value="ECO:0000250"/>
    <property type="project" value="UniProtKB"/>
</dbReference>
<dbReference type="GO" id="GO:0006108">
    <property type="term" value="P:malate metabolic process"/>
    <property type="evidence" value="ECO:0007669"/>
    <property type="project" value="InterPro"/>
</dbReference>
<dbReference type="GO" id="GO:0006099">
    <property type="term" value="P:tricarboxylic acid cycle"/>
    <property type="evidence" value="ECO:0000318"/>
    <property type="project" value="GO_Central"/>
</dbReference>
<dbReference type="CDD" id="cd01337">
    <property type="entry name" value="MDH_glyoxysomal_mitochondrial"/>
    <property type="match status" value="1"/>
</dbReference>
<dbReference type="FunFam" id="3.40.50.720:FF:000013">
    <property type="entry name" value="Malate dehydrogenase"/>
    <property type="match status" value="1"/>
</dbReference>
<dbReference type="FunFam" id="3.90.110.10:FF:000001">
    <property type="entry name" value="Malate dehydrogenase"/>
    <property type="match status" value="1"/>
</dbReference>
<dbReference type="Gene3D" id="3.90.110.10">
    <property type="entry name" value="Lactate dehydrogenase/glycoside hydrolase, family 4, C-terminal"/>
    <property type="match status" value="1"/>
</dbReference>
<dbReference type="Gene3D" id="3.40.50.720">
    <property type="entry name" value="NAD(P)-binding Rossmann-like Domain"/>
    <property type="match status" value="1"/>
</dbReference>
<dbReference type="InterPro" id="IPR001557">
    <property type="entry name" value="L-lactate/malate_DH"/>
</dbReference>
<dbReference type="InterPro" id="IPR022383">
    <property type="entry name" value="Lactate/malate_DH_C"/>
</dbReference>
<dbReference type="InterPro" id="IPR001236">
    <property type="entry name" value="Lactate/malate_DH_N"/>
</dbReference>
<dbReference type="InterPro" id="IPR015955">
    <property type="entry name" value="Lactate_DH/Glyco_Ohase_4_C"/>
</dbReference>
<dbReference type="InterPro" id="IPR001252">
    <property type="entry name" value="Malate_DH_AS"/>
</dbReference>
<dbReference type="InterPro" id="IPR010097">
    <property type="entry name" value="Malate_DH_type1"/>
</dbReference>
<dbReference type="InterPro" id="IPR036291">
    <property type="entry name" value="NAD(P)-bd_dom_sf"/>
</dbReference>
<dbReference type="NCBIfam" id="TIGR01772">
    <property type="entry name" value="MDH_euk_gproteo"/>
    <property type="match status" value="1"/>
</dbReference>
<dbReference type="PANTHER" id="PTHR11540">
    <property type="entry name" value="MALATE AND LACTATE DEHYDROGENASE"/>
    <property type="match status" value="1"/>
</dbReference>
<dbReference type="PANTHER" id="PTHR11540:SF16">
    <property type="entry name" value="MALATE DEHYDROGENASE, MITOCHONDRIAL"/>
    <property type="match status" value="1"/>
</dbReference>
<dbReference type="Pfam" id="PF02866">
    <property type="entry name" value="Ldh_1_C"/>
    <property type="match status" value="1"/>
</dbReference>
<dbReference type="Pfam" id="PF00056">
    <property type="entry name" value="Ldh_1_N"/>
    <property type="match status" value="1"/>
</dbReference>
<dbReference type="PIRSF" id="PIRSF000102">
    <property type="entry name" value="Lac_mal_DH"/>
    <property type="match status" value="1"/>
</dbReference>
<dbReference type="SUPFAM" id="SSF56327">
    <property type="entry name" value="LDH C-terminal domain-like"/>
    <property type="match status" value="1"/>
</dbReference>
<dbReference type="SUPFAM" id="SSF51735">
    <property type="entry name" value="NAD(P)-binding Rossmann-fold domains"/>
    <property type="match status" value="1"/>
</dbReference>
<dbReference type="PROSITE" id="PS00068">
    <property type="entry name" value="MDH"/>
    <property type="match status" value="1"/>
</dbReference>
<proteinExistence type="evidence at protein level"/>